<proteinExistence type="inferred from homology"/>
<name>PYRDB_BACCZ</name>
<gene>
    <name type="primary">pyrD</name>
    <name type="ordered locus">BCE33L3643</name>
</gene>
<dbReference type="EC" id="1.3.1.14"/>
<dbReference type="EMBL" id="CP000001">
    <property type="protein sequence ID" value="AAU16621.1"/>
    <property type="molecule type" value="Genomic_DNA"/>
</dbReference>
<dbReference type="RefSeq" id="WP_001081057.1">
    <property type="nucleotide sequence ID" value="NZ_CP009968.1"/>
</dbReference>
<dbReference type="SMR" id="Q636E2"/>
<dbReference type="GeneID" id="83637592"/>
<dbReference type="KEGG" id="bcz:BCE33L3643"/>
<dbReference type="PATRIC" id="fig|288681.22.peg.1768"/>
<dbReference type="UniPathway" id="UPA00070">
    <property type="reaction ID" value="UER00945"/>
</dbReference>
<dbReference type="Proteomes" id="UP000002612">
    <property type="component" value="Chromosome"/>
</dbReference>
<dbReference type="GO" id="GO:0005737">
    <property type="term" value="C:cytoplasm"/>
    <property type="evidence" value="ECO:0007669"/>
    <property type="project" value="UniProtKB-SubCell"/>
</dbReference>
<dbReference type="GO" id="GO:0004589">
    <property type="term" value="F:dihydroorotate dehydrogenase (NAD+) activity"/>
    <property type="evidence" value="ECO:0007669"/>
    <property type="project" value="UniProtKB-EC"/>
</dbReference>
<dbReference type="GO" id="GO:0006207">
    <property type="term" value="P:'de novo' pyrimidine nucleobase biosynthetic process"/>
    <property type="evidence" value="ECO:0007669"/>
    <property type="project" value="InterPro"/>
</dbReference>
<dbReference type="GO" id="GO:0044205">
    <property type="term" value="P:'de novo' UMP biosynthetic process"/>
    <property type="evidence" value="ECO:0007669"/>
    <property type="project" value="UniProtKB-UniRule"/>
</dbReference>
<dbReference type="CDD" id="cd04740">
    <property type="entry name" value="DHOD_1B_like"/>
    <property type="match status" value="1"/>
</dbReference>
<dbReference type="FunFam" id="3.20.20.70:FF:000069">
    <property type="entry name" value="Dihydroorotate dehydrogenase"/>
    <property type="match status" value="1"/>
</dbReference>
<dbReference type="Gene3D" id="3.20.20.70">
    <property type="entry name" value="Aldolase class I"/>
    <property type="match status" value="1"/>
</dbReference>
<dbReference type="HAMAP" id="MF_00224">
    <property type="entry name" value="DHO_dh_type1"/>
    <property type="match status" value="1"/>
</dbReference>
<dbReference type="InterPro" id="IPR013785">
    <property type="entry name" value="Aldolase_TIM"/>
</dbReference>
<dbReference type="InterPro" id="IPR050074">
    <property type="entry name" value="DHO_dehydrogenase"/>
</dbReference>
<dbReference type="InterPro" id="IPR033888">
    <property type="entry name" value="DHOD_1B"/>
</dbReference>
<dbReference type="InterPro" id="IPR024920">
    <property type="entry name" value="Dihydroorotate_DH_1"/>
</dbReference>
<dbReference type="InterPro" id="IPR012135">
    <property type="entry name" value="Dihydroorotate_DH_1_2"/>
</dbReference>
<dbReference type="InterPro" id="IPR005720">
    <property type="entry name" value="Dihydroorotate_DH_cat"/>
</dbReference>
<dbReference type="InterPro" id="IPR001295">
    <property type="entry name" value="Dihydroorotate_DH_CS"/>
</dbReference>
<dbReference type="InterPro" id="IPR049622">
    <property type="entry name" value="Dihydroorotate_DH_I"/>
</dbReference>
<dbReference type="NCBIfam" id="NF005574">
    <property type="entry name" value="PRK07259.1"/>
    <property type="match status" value="1"/>
</dbReference>
<dbReference type="NCBIfam" id="TIGR01037">
    <property type="entry name" value="pyrD_sub1_fam"/>
    <property type="match status" value="1"/>
</dbReference>
<dbReference type="PANTHER" id="PTHR48109:SF1">
    <property type="entry name" value="DIHYDROOROTATE DEHYDROGENASE (FUMARATE)"/>
    <property type="match status" value="1"/>
</dbReference>
<dbReference type="PANTHER" id="PTHR48109">
    <property type="entry name" value="DIHYDROOROTATE DEHYDROGENASE (QUINONE), MITOCHONDRIAL-RELATED"/>
    <property type="match status" value="1"/>
</dbReference>
<dbReference type="Pfam" id="PF01180">
    <property type="entry name" value="DHO_dh"/>
    <property type="match status" value="1"/>
</dbReference>
<dbReference type="PIRSF" id="PIRSF000164">
    <property type="entry name" value="DHO_oxidase"/>
    <property type="match status" value="1"/>
</dbReference>
<dbReference type="SUPFAM" id="SSF51395">
    <property type="entry name" value="FMN-linked oxidoreductases"/>
    <property type="match status" value="1"/>
</dbReference>
<dbReference type="PROSITE" id="PS00911">
    <property type="entry name" value="DHODEHASE_1"/>
    <property type="match status" value="1"/>
</dbReference>
<dbReference type="PROSITE" id="PS00912">
    <property type="entry name" value="DHODEHASE_2"/>
    <property type="match status" value="1"/>
</dbReference>
<keyword id="KW-0963">Cytoplasm</keyword>
<keyword id="KW-0285">Flavoprotein</keyword>
<keyword id="KW-0288">FMN</keyword>
<keyword id="KW-0520">NAD</keyword>
<keyword id="KW-0560">Oxidoreductase</keyword>
<keyword id="KW-0665">Pyrimidine biosynthesis</keyword>
<reference key="1">
    <citation type="journal article" date="2006" name="J. Bacteriol.">
        <title>Pathogenomic sequence analysis of Bacillus cereus and Bacillus thuringiensis isolates closely related to Bacillus anthracis.</title>
        <authorList>
            <person name="Han C.S."/>
            <person name="Xie G."/>
            <person name="Challacombe J.F."/>
            <person name="Altherr M.R."/>
            <person name="Bhotika S.S."/>
            <person name="Bruce D."/>
            <person name="Campbell C.S."/>
            <person name="Campbell M.L."/>
            <person name="Chen J."/>
            <person name="Chertkov O."/>
            <person name="Cleland C."/>
            <person name="Dimitrijevic M."/>
            <person name="Doggett N.A."/>
            <person name="Fawcett J.J."/>
            <person name="Glavina T."/>
            <person name="Goodwin L.A."/>
            <person name="Hill K.K."/>
            <person name="Hitchcock P."/>
            <person name="Jackson P.J."/>
            <person name="Keim P."/>
            <person name="Kewalramani A.R."/>
            <person name="Longmire J."/>
            <person name="Lucas S."/>
            <person name="Malfatti S."/>
            <person name="McMurry K."/>
            <person name="Meincke L.J."/>
            <person name="Misra M."/>
            <person name="Moseman B.L."/>
            <person name="Mundt M."/>
            <person name="Munk A.C."/>
            <person name="Okinaka R.T."/>
            <person name="Parson-Quintana B."/>
            <person name="Reilly L.P."/>
            <person name="Richardson P."/>
            <person name="Robinson D.L."/>
            <person name="Rubin E."/>
            <person name="Saunders E."/>
            <person name="Tapia R."/>
            <person name="Tesmer J.G."/>
            <person name="Thayer N."/>
            <person name="Thompson L.S."/>
            <person name="Tice H."/>
            <person name="Ticknor L.O."/>
            <person name="Wills P.L."/>
            <person name="Brettin T.S."/>
            <person name="Gilna P."/>
        </authorList>
    </citation>
    <scope>NUCLEOTIDE SEQUENCE [LARGE SCALE GENOMIC DNA]</scope>
    <source>
        <strain>ZK / E33L</strain>
    </source>
</reference>
<feature type="chain" id="PRO_1000024126" description="Dihydroorotate dehydrogenase B (NAD(+)), catalytic subunit">
    <location>
        <begin position="1"/>
        <end position="309"/>
    </location>
</feature>
<feature type="active site" description="Nucleophile">
    <location>
        <position position="130"/>
    </location>
</feature>
<feature type="binding site" evidence="1">
    <location>
        <position position="21"/>
    </location>
    <ligand>
        <name>FMN</name>
        <dbReference type="ChEBI" id="CHEBI:58210"/>
    </ligand>
</feature>
<feature type="binding site" evidence="1">
    <location>
        <begin position="45"/>
        <end position="46"/>
    </location>
    <ligand>
        <name>FMN</name>
        <dbReference type="ChEBI" id="CHEBI:58210"/>
    </ligand>
</feature>
<feature type="binding site" evidence="1">
    <location>
        <position position="45"/>
    </location>
    <ligand>
        <name>substrate</name>
    </ligand>
</feature>
<feature type="binding site" evidence="1">
    <location>
        <begin position="69"/>
        <end position="73"/>
    </location>
    <ligand>
        <name>substrate</name>
    </ligand>
</feature>
<feature type="binding site" evidence="1">
    <location>
        <position position="99"/>
    </location>
    <ligand>
        <name>FMN</name>
        <dbReference type="ChEBI" id="CHEBI:58210"/>
    </ligand>
</feature>
<feature type="binding site" evidence="1">
    <location>
        <position position="127"/>
    </location>
    <ligand>
        <name>FMN</name>
        <dbReference type="ChEBI" id="CHEBI:58210"/>
    </ligand>
</feature>
<feature type="binding site" evidence="1">
    <location>
        <position position="127"/>
    </location>
    <ligand>
        <name>substrate</name>
    </ligand>
</feature>
<feature type="binding site" evidence="1">
    <location>
        <position position="165"/>
    </location>
    <ligand>
        <name>FMN</name>
        <dbReference type="ChEBI" id="CHEBI:58210"/>
    </ligand>
</feature>
<feature type="binding site" evidence="1">
    <location>
        <position position="191"/>
    </location>
    <ligand>
        <name>FMN</name>
        <dbReference type="ChEBI" id="CHEBI:58210"/>
    </ligand>
</feature>
<feature type="binding site" evidence="1">
    <location>
        <begin position="192"/>
        <end position="193"/>
    </location>
    <ligand>
        <name>substrate</name>
    </ligand>
</feature>
<feature type="binding site" evidence="1">
    <location>
        <position position="217"/>
    </location>
    <ligand>
        <name>FMN</name>
        <dbReference type="ChEBI" id="CHEBI:58210"/>
    </ligand>
</feature>
<feature type="binding site" evidence="1">
    <location>
        <begin position="243"/>
        <end position="244"/>
    </location>
    <ligand>
        <name>FMN</name>
        <dbReference type="ChEBI" id="CHEBI:58210"/>
    </ligand>
</feature>
<feature type="binding site" evidence="1">
    <location>
        <begin position="265"/>
        <end position="266"/>
    </location>
    <ligand>
        <name>FMN</name>
        <dbReference type="ChEBI" id="CHEBI:58210"/>
    </ligand>
</feature>
<sequence>MNRLQVELPGLSLKNPIIPASGCFGFGREYAQFYDLSVLGSIMIKATTEQPRYGNPTPRVAETPGGMLNAIGLQNPGLEKVMNSELPWLEQFDLPIIANVAGSQAEDYVAVAKEISKAPNVHALELNISCPNVKTGGIAFGTNPEIAADLTKRVKEVSEVPVYVKLSPNVANIVEIAKAIENAGADGLTMINTLLGMRLDLKTAKPILANRTGGLSGPAIKPVAIRMVHEVSQAVNIPIIGMGGIETAEDVIEFFYAGASAVAVGTANFIDPFVCPTIIEELPALLDELGFDHISECQGRSWKQTCHSR</sequence>
<organism>
    <name type="scientific">Bacillus cereus (strain ZK / E33L)</name>
    <dbReference type="NCBI Taxonomy" id="288681"/>
    <lineage>
        <taxon>Bacteria</taxon>
        <taxon>Bacillati</taxon>
        <taxon>Bacillota</taxon>
        <taxon>Bacilli</taxon>
        <taxon>Bacillales</taxon>
        <taxon>Bacillaceae</taxon>
        <taxon>Bacillus</taxon>
        <taxon>Bacillus cereus group</taxon>
    </lineage>
</organism>
<evidence type="ECO:0000250" key="1"/>
<evidence type="ECO:0000305" key="2"/>
<protein>
    <recommendedName>
        <fullName>Dihydroorotate dehydrogenase B (NAD(+)), catalytic subunit</fullName>
        <shortName>DHOD B</shortName>
        <shortName>DHODase B</shortName>
        <shortName>DHOdehase B</shortName>
        <ecNumber>1.3.1.14</ecNumber>
    </recommendedName>
    <alternativeName>
        <fullName>Dihydroorotate oxidase B</fullName>
    </alternativeName>
    <alternativeName>
        <fullName>Orotate reductase (NADH)</fullName>
    </alternativeName>
</protein>
<accession>Q636E2</accession>
<comment type="function">
    <text evidence="1">Catalyzes the conversion of dihydroorotate to orotate with NAD(+) as electron acceptor.</text>
</comment>
<comment type="catalytic activity">
    <reaction>
        <text>(S)-dihydroorotate + NAD(+) = orotate + NADH + H(+)</text>
        <dbReference type="Rhea" id="RHEA:13513"/>
        <dbReference type="ChEBI" id="CHEBI:15378"/>
        <dbReference type="ChEBI" id="CHEBI:30839"/>
        <dbReference type="ChEBI" id="CHEBI:30864"/>
        <dbReference type="ChEBI" id="CHEBI:57540"/>
        <dbReference type="ChEBI" id="CHEBI:57945"/>
        <dbReference type="EC" id="1.3.1.14"/>
    </reaction>
</comment>
<comment type="cofactor">
    <cofactor evidence="1">
        <name>FMN</name>
        <dbReference type="ChEBI" id="CHEBI:58210"/>
    </cofactor>
    <text evidence="1">Binds 1 FMN per subunit.</text>
</comment>
<comment type="pathway">
    <text>Pyrimidine metabolism; UMP biosynthesis via de novo pathway; orotate from (S)-dihydroorotate (NAD(+) route): step 1/1.</text>
</comment>
<comment type="subunit">
    <text evidence="1">Heterotetramer of 2 PyrK and 2 PyrD type B subunits.</text>
</comment>
<comment type="subcellular location">
    <subcellularLocation>
        <location evidence="1">Cytoplasm</location>
    </subcellularLocation>
</comment>
<comment type="similarity">
    <text evidence="2">Belongs to the dihydroorotate dehydrogenase family. Type 1 subfamily.</text>
</comment>